<sequence length="140" mass="15759">MLMPKKVKHRKQMKGRMSGTPQRGVSLAFGDYGLQATECGWLDSRQIEAARIAMNRYIKRGGKIWIRIFPDKPLTAKPAETRMGKGKGSPDSWVCVIKPGRILYEMEGVTEEVAREAFRLAAHKLPIPTKFTSRKDANEG</sequence>
<protein>
    <recommendedName>
        <fullName evidence="1">Large ribosomal subunit protein uL16</fullName>
    </recommendedName>
    <alternativeName>
        <fullName evidence="3">50S ribosomal protein L16</fullName>
    </alternativeName>
</protein>
<accession>B9M6H1</accession>
<evidence type="ECO:0000255" key="1">
    <source>
        <dbReference type="HAMAP-Rule" id="MF_01342"/>
    </source>
</evidence>
<evidence type="ECO:0000256" key="2">
    <source>
        <dbReference type="SAM" id="MobiDB-lite"/>
    </source>
</evidence>
<evidence type="ECO:0000305" key="3"/>
<organism>
    <name type="scientific">Geotalea daltonii (strain DSM 22248 / JCM 15807 / FRC-32)</name>
    <name type="common">Geobacter daltonii</name>
    <dbReference type="NCBI Taxonomy" id="316067"/>
    <lineage>
        <taxon>Bacteria</taxon>
        <taxon>Pseudomonadati</taxon>
        <taxon>Thermodesulfobacteriota</taxon>
        <taxon>Desulfuromonadia</taxon>
        <taxon>Geobacterales</taxon>
        <taxon>Geobacteraceae</taxon>
        <taxon>Geotalea</taxon>
    </lineage>
</organism>
<proteinExistence type="inferred from homology"/>
<feature type="chain" id="PRO_1000166360" description="Large ribosomal subunit protein uL16">
    <location>
        <begin position="1"/>
        <end position="140"/>
    </location>
</feature>
<feature type="region of interest" description="Disordered" evidence="2">
    <location>
        <begin position="1"/>
        <end position="20"/>
    </location>
</feature>
<feature type="compositionally biased region" description="Basic residues" evidence="2">
    <location>
        <begin position="1"/>
        <end position="14"/>
    </location>
</feature>
<keyword id="KW-1185">Reference proteome</keyword>
<keyword id="KW-0687">Ribonucleoprotein</keyword>
<keyword id="KW-0689">Ribosomal protein</keyword>
<keyword id="KW-0694">RNA-binding</keyword>
<keyword id="KW-0699">rRNA-binding</keyword>
<keyword id="KW-0820">tRNA-binding</keyword>
<reference key="1">
    <citation type="submission" date="2009-01" db="EMBL/GenBank/DDBJ databases">
        <title>Complete sequence of Geobacter sp. FRC-32.</title>
        <authorList>
            <consortium name="US DOE Joint Genome Institute"/>
            <person name="Lucas S."/>
            <person name="Copeland A."/>
            <person name="Lapidus A."/>
            <person name="Glavina del Rio T."/>
            <person name="Dalin E."/>
            <person name="Tice H."/>
            <person name="Bruce D."/>
            <person name="Goodwin L."/>
            <person name="Pitluck S."/>
            <person name="Saunders E."/>
            <person name="Brettin T."/>
            <person name="Detter J.C."/>
            <person name="Han C."/>
            <person name="Larimer F."/>
            <person name="Land M."/>
            <person name="Hauser L."/>
            <person name="Kyrpides N."/>
            <person name="Ovchinnikova G."/>
            <person name="Kostka J."/>
            <person name="Richardson P."/>
        </authorList>
    </citation>
    <scope>NUCLEOTIDE SEQUENCE [LARGE SCALE GENOMIC DNA]</scope>
    <source>
        <strain>DSM 22248 / JCM 15807 / FRC-32</strain>
    </source>
</reference>
<dbReference type="EMBL" id="CP001390">
    <property type="protein sequence ID" value="ACM21959.1"/>
    <property type="molecule type" value="Genomic_DNA"/>
</dbReference>
<dbReference type="RefSeq" id="WP_012648686.1">
    <property type="nucleotide sequence ID" value="NC_011979.1"/>
</dbReference>
<dbReference type="SMR" id="B9M6H1"/>
<dbReference type="STRING" id="316067.Geob_3618"/>
<dbReference type="KEGG" id="geo:Geob_3618"/>
<dbReference type="eggNOG" id="COG0197">
    <property type="taxonomic scope" value="Bacteria"/>
</dbReference>
<dbReference type="HOGENOM" id="CLU_078858_2_1_7"/>
<dbReference type="OrthoDB" id="9802589at2"/>
<dbReference type="Proteomes" id="UP000007721">
    <property type="component" value="Chromosome"/>
</dbReference>
<dbReference type="GO" id="GO:0022625">
    <property type="term" value="C:cytosolic large ribosomal subunit"/>
    <property type="evidence" value="ECO:0007669"/>
    <property type="project" value="TreeGrafter"/>
</dbReference>
<dbReference type="GO" id="GO:0019843">
    <property type="term" value="F:rRNA binding"/>
    <property type="evidence" value="ECO:0007669"/>
    <property type="project" value="UniProtKB-UniRule"/>
</dbReference>
<dbReference type="GO" id="GO:0003735">
    <property type="term" value="F:structural constituent of ribosome"/>
    <property type="evidence" value="ECO:0007669"/>
    <property type="project" value="InterPro"/>
</dbReference>
<dbReference type="GO" id="GO:0000049">
    <property type="term" value="F:tRNA binding"/>
    <property type="evidence" value="ECO:0007669"/>
    <property type="project" value="UniProtKB-KW"/>
</dbReference>
<dbReference type="GO" id="GO:0006412">
    <property type="term" value="P:translation"/>
    <property type="evidence" value="ECO:0007669"/>
    <property type="project" value="UniProtKB-UniRule"/>
</dbReference>
<dbReference type="CDD" id="cd01433">
    <property type="entry name" value="Ribosomal_L16_L10e"/>
    <property type="match status" value="1"/>
</dbReference>
<dbReference type="FunFam" id="3.90.1170.10:FF:000001">
    <property type="entry name" value="50S ribosomal protein L16"/>
    <property type="match status" value="1"/>
</dbReference>
<dbReference type="Gene3D" id="3.90.1170.10">
    <property type="entry name" value="Ribosomal protein L10e/L16"/>
    <property type="match status" value="1"/>
</dbReference>
<dbReference type="HAMAP" id="MF_01342">
    <property type="entry name" value="Ribosomal_uL16"/>
    <property type="match status" value="1"/>
</dbReference>
<dbReference type="InterPro" id="IPR047873">
    <property type="entry name" value="Ribosomal_uL16"/>
</dbReference>
<dbReference type="InterPro" id="IPR000114">
    <property type="entry name" value="Ribosomal_uL16_bact-type"/>
</dbReference>
<dbReference type="InterPro" id="IPR020798">
    <property type="entry name" value="Ribosomal_uL16_CS"/>
</dbReference>
<dbReference type="InterPro" id="IPR016180">
    <property type="entry name" value="Ribosomal_uL16_dom"/>
</dbReference>
<dbReference type="InterPro" id="IPR036920">
    <property type="entry name" value="Ribosomal_uL16_sf"/>
</dbReference>
<dbReference type="NCBIfam" id="TIGR01164">
    <property type="entry name" value="rplP_bact"/>
    <property type="match status" value="1"/>
</dbReference>
<dbReference type="PANTHER" id="PTHR12220">
    <property type="entry name" value="50S/60S RIBOSOMAL PROTEIN L16"/>
    <property type="match status" value="1"/>
</dbReference>
<dbReference type="PANTHER" id="PTHR12220:SF13">
    <property type="entry name" value="LARGE RIBOSOMAL SUBUNIT PROTEIN UL16M"/>
    <property type="match status" value="1"/>
</dbReference>
<dbReference type="Pfam" id="PF00252">
    <property type="entry name" value="Ribosomal_L16"/>
    <property type="match status" value="1"/>
</dbReference>
<dbReference type="PRINTS" id="PR00060">
    <property type="entry name" value="RIBOSOMALL16"/>
</dbReference>
<dbReference type="SUPFAM" id="SSF54686">
    <property type="entry name" value="Ribosomal protein L16p/L10e"/>
    <property type="match status" value="1"/>
</dbReference>
<dbReference type="PROSITE" id="PS00586">
    <property type="entry name" value="RIBOSOMAL_L16_1"/>
    <property type="match status" value="1"/>
</dbReference>
<dbReference type="PROSITE" id="PS00701">
    <property type="entry name" value="RIBOSOMAL_L16_2"/>
    <property type="match status" value="1"/>
</dbReference>
<name>RL16_GEODF</name>
<comment type="function">
    <text evidence="1">Binds 23S rRNA and is also seen to make contacts with the A and possibly P site tRNAs.</text>
</comment>
<comment type="subunit">
    <text evidence="1">Part of the 50S ribosomal subunit.</text>
</comment>
<comment type="similarity">
    <text evidence="1">Belongs to the universal ribosomal protein uL16 family.</text>
</comment>
<gene>
    <name evidence="1" type="primary">rplP</name>
    <name type="ordered locus">Geob_3618</name>
</gene>